<sequence length="258" mass="28457">MSDTLYWHVSGQGPDLVLVHGWGMNGAVWQQTVDALEADFRVHVVDLPGYGHSAHCHAQDLEEIAQQLLAEAPKRAIWVGWSLGGLVATHMALHHSDYVSKLVTVASSPKFAAAKEPVLWRGIQPNVLSAFTEQLVEDFQTTIERFMALQAMGSPSARQDVKQLKQAVLSRPLPNPDSLLAGLKMLSDVDLREQLPEISVPMLRLYGRLDGLVPIKVAKDLGRALPHTEQYIFTQSSHAPFMTEADAFCSELVSFAQK</sequence>
<evidence type="ECO:0000255" key="1"/>
<evidence type="ECO:0000255" key="2">
    <source>
        <dbReference type="HAMAP-Rule" id="MF_01260"/>
    </source>
</evidence>
<name>BIOH_VIBA3</name>
<comment type="function">
    <text evidence="2">The physiological role of BioH is to remove the methyl group introduced by BioC when the pimeloyl moiety is complete. It allows to synthesize pimeloyl-ACP via the fatty acid synthetic pathway through the hydrolysis of the ester bonds of pimeloyl-ACP esters.</text>
</comment>
<comment type="catalytic activity">
    <reaction evidence="2">
        <text>6-carboxyhexanoyl-[ACP] methyl ester + H2O = 6-carboxyhexanoyl-[ACP] + methanol + H(+)</text>
        <dbReference type="Rhea" id="RHEA:42700"/>
        <dbReference type="Rhea" id="RHEA-COMP:9955"/>
        <dbReference type="Rhea" id="RHEA-COMP:10186"/>
        <dbReference type="ChEBI" id="CHEBI:15377"/>
        <dbReference type="ChEBI" id="CHEBI:15378"/>
        <dbReference type="ChEBI" id="CHEBI:17790"/>
        <dbReference type="ChEBI" id="CHEBI:78846"/>
        <dbReference type="ChEBI" id="CHEBI:82735"/>
        <dbReference type="EC" id="3.1.1.85"/>
    </reaction>
</comment>
<comment type="pathway">
    <text evidence="2">Cofactor biosynthesis; biotin biosynthesis.</text>
</comment>
<comment type="subunit">
    <text evidence="2">Monomer.</text>
</comment>
<comment type="subcellular location">
    <subcellularLocation>
        <location evidence="2">Cytoplasm</location>
    </subcellularLocation>
</comment>
<comment type="similarity">
    <text evidence="2">Belongs to the AB hydrolase superfamily. Carboxylesterase BioH family.</text>
</comment>
<protein>
    <recommendedName>
        <fullName evidence="2">Pimeloyl-[acyl-carrier protein] methyl ester esterase</fullName>
        <ecNumber evidence="2">3.1.1.85</ecNumber>
    </recommendedName>
    <alternativeName>
        <fullName evidence="2">Biotin synthesis protein BioH</fullName>
    </alternativeName>
    <alternativeName>
        <fullName evidence="2">Carboxylesterase BioH</fullName>
    </alternativeName>
</protein>
<keyword id="KW-0093">Biotin biosynthesis</keyword>
<keyword id="KW-0963">Cytoplasm</keyword>
<keyword id="KW-0378">Hydrolase</keyword>
<keyword id="KW-0719">Serine esterase</keyword>
<accession>B7VHH1</accession>
<proteinExistence type="inferred from homology"/>
<organism>
    <name type="scientific">Vibrio atlanticus (strain LGP32)</name>
    <name type="common">Vibrio splendidus (strain Mel32)</name>
    <dbReference type="NCBI Taxonomy" id="575788"/>
    <lineage>
        <taxon>Bacteria</taxon>
        <taxon>Pseudomonadati</taxon>
        <taxon>Pseudomonadota</taxon>
        <taxon>Gammaproteobacteria</taxon>
        <taxon>Vibrionales</taxon>
        <taxon>Vibrionaceae</taxon>
        <taxon>Vibrio</taxon>
    </lineage>
</organism>
<reference key="1">
    <citation type="submission" date="2009-02" db="EMBL/GenBank/DDBJ databases">
        <title>Vibrio splendidus str. LGP32 complete genome.</title>
        <authorList>
            <person name="Mazel D."/>
            <person name="Le Roux F."/>
        </authorList>
    </citation>
    <scope>NUCLEOTIDE SEQUENCE [LARGE SCALE GENOMIC DNA]</scope>
    <source>
        <strain>LGP32</strain>
    </source>
</reference>
<dbReference type="EC" id="3.1.1.85" evidence="2"/>
<dbReference type="EMBL" id="FM954972">
    <property type="protein sequence ID" value="CAV17183.1"/>
    <property type="molecule type" value="Genomic_DNA"/>
</dbReference>
<dbReference type="SMR" id="B7VHH1"/>
<dbReference type="STRING" id="575788.VS_0150"/>
<dbReference type="ESTHER" id="vibsl-bioh">
    <property type="family name" value="BioH"/>
</dbReference>
<dbReference type="KEGG" id="vsp:VS_0150"/>
<dbReference type="PATRIC" id="fig|575788.5.peg.1540"/>
<dbReference type="eggNOG" id="COG0596">
    <property type="taxonomic scope" value="Bacteria"/>
</dbReference>
<dbReference type="HOGENOM" id="CLU_020336_12_2_6"/>
<dbReference type="UniPathway" id="UPA00078"/>
<dbReference type="Proteomes" id="UP000009100">
    <property type="component" value="Chromosome 1"/>
</dbReference>
<dbReference type="GO" id="GO:0005737">
    <property type="term" value="C:cytoplasm"/>
    <property type="evidence" value="ECO:0007669"/>
    <property type="project" value="UniProtKB-SubCell"/>
</dbReference>
<dbReference type="GO" id="GO:0016020">
    <property type="term" value="C:membrane"/>
    <property type="evidence" value="ECO:0007669"/>
    <property type="project" value="TreeGrafter"/>
</dbReference>
<dbReference type="GO" id="GO:0090499">
    <property type="term" value="F:pimelyl-[acyl-carrier protein] methyl ester esterase activity"/>
    <property type="evidence" value="ECO:0007669"/>
    <property type="project" value="UniProtKB-EC"/>
</dbReference>
<dbReference type="GO" id="GO:0009102">
    <property type="term" value="P:biotin biosynthetic process"/>
    <property type="evidence" value="ECO:0007669"/>
    <property type="project" value="UniProtKB-UniRule"/>
</dbReference>
<dbReference type="Gene3D" id="3.40.50.1820">
    <property type="entry name" value="alpha/beta hydrolase"/>
    <property type="match status" value="1"/>
</dbReference>
<dbReference type="HAMAP" id="MF_01260">
    <property type="entry name" value="Carboxylester"/>
    <property type="match status" value="1"/>
</dbReference>
<dbReference type="InterPro" id="IPR000073">
    <property type="entry name" value="AB_hydrolase_1"/>
</dbReference>
<dbReference type="InterPro" id="IPR029058">
    <property type="entry name" value="AB_hydrolase_fold"/>
</dbReference>
<dbReference type="InterPro" id="IPR050266">
    <property type="entry name" value="AB_hydrolase_sf"/>
</dbReference>
<dbReference type="InterPro" id="IPR010076">
    <property type="entry name" value="BioH"/>
</dbReference>
<dbReference type="NCBIfam" id="TIGR01738">
    <property type="entry name" value="bioH"/>
    <property type="match status" value="1"/>
</dbReference>
<dbReference type="PANTHER" id="PTHR43798:SF31">
    <property type="entry name" value="AB HYDROLASE SUPERFAMILY PROTEIN YCLE"/>
    <property type="match status" value="1"/>
</dbReference>
<dbReference type="PANTHER" id="PTHR43798">
    <property type="entry name" value="MONOACYLGLYCEROL LIPASE"/>
    <property type="match status" value="1"/>
</dbReference>
<dbReference type="Pfam" id="PF00561">
    <property type="entry name" value="Abhydrolase_1"/>
    <property type="match status" value="1"/>
</dbReference>
<dbReference type="SUPFAM" id="SSF53474">
    <property type="entry name" value="alpha/beta-Hydrolases"/>
    <property type="match status" value="1"/>
</dbReference>
<gene>
    <name evidence="2" type="primary">bioH</name>
    <name type="ordered locus">VS_0150</name>
</gene>
<feature type="chain" id="PRO_1000165117" description="Pimeloyl-[acyl-carrier protein] methyl ester esterase">
    <location>
        <begin position="1"/>
        <end position="258"/>
    </location>
</feature>
<feature type="domain" description="AB hydrolase-1" evidence="1">
    <location>
        <begin position="16"/>
        <end position="244"/>
    </location>
</feature>
<feature type="active site" description="Nucleophile" evidence="2">
    <location>
        <position position="82"/>
    </location>
</feature>
<feature type="active site" evidence="2">
    <location>
        <position position="210"/>
    </location>
</feature>
<feature type="active site" evidence="2">
    <location>
        <position position="238"/>
    </location>
</feature>
<feature type="binding site" evidence="2">
    <location>
        <position position="22"/>
    </location>
    <ligand>
        <name>substrate</name>
    </ligand>
</feature>
<feature type="binding site" evidence="2">
    <location>
        <begin position="82"/>
        <end position="83"/>
    </location>
    <ligand>
        <name>substrate</name>
    </ligand>
</feature>
<feature type="binding site" evidence="2">
    <location>
        <begin position="146"/>
        <end position="150"/>
    </location>
    <ligand>
        <name>substrate</name>
    </ligand>
</feature>
<feature type="binding site" evidence="2">
    <location>
        <position position="238"/>
    </location>
    <ligand>
        <name>substrate</name>
    </ligand>
</feature>